<keyword id="KW-0963">Cytoplasm</keyword>
<keyword id="KW-0238">DNA-binding</keyword>
<keyword id="KW-0804">Transcription</keyword>
<keyword id="KW-0805">Transcription regulation</keyword>
<protein>
    <recommendedName>
        <fullName evidence="1">Probable transcriptional regulatory protein cgR_1708</fullName>
    </recommendedName>
</protein>
<comment type="subcellular location">
    <subcellularLocation>
        <location evidence="1">Cytoplasm</location>
    </subcellularLocation>
</comment>
<comment type="similarity">
    <text evidence="1">Belongs to the TACO1 family.</text>
</comment>
<accession>A4QEN6</accession>
<feature type="chain" id="PRO_1000045303" description="Probable transcriptional regulatory protein cgR_1708">
    <location>
        <begin position="1"/>
        <end position="251"/>
    </location>
</feature>
<feature type="region of interest" description="Disordered" evidence="2">
    <location>
        <begin position="1"/>
        <end position="22"/>
    </location>
</feature>
<sequence length="251" mass="26962">MAGHSKWATTKHKKAANDAKRGKEFAKLIKNIEVAARTGGGDPSANPTLDDMIKKAKKASVPNDNIERARKRGSGEEAGGADWMNIMYEGYGPNGVAMLIECLTDNRNRAATEVRTAMTKNGGNLGESGSVSYMFTRTGVVTVQKGELSEDDVLMAVLEAGAEEVNDNGDLFEITCAPTDIQAVRDALVEAGIEVEDSESDFRASVEVPLDADGARKIFKLVDALEDSDDVQNVYTNIDLSDEVLAELESD</sequence>
<reference key="1">
    <citation type="journal article" date="2007" name="Microbiology">
        <title>Comparative analysis of the Corynebacterium glutamicum group and complete genome sequence of strain R.</title>
        <authorList>
            <person name="Yukawa H."/>
            <person name="Omumasaba C.A."/>
            <person name="Nonaka H."/>
            <person name="Kos P."/>
            <person name="Okai N."/>
            <person name="Suzuki N."/>
            <person name="Suda M."/>
            <person name="Tsuge Y."/>
            <person name="Watanabe J."/>
            <person name="Ikeda Y."/>
            <person name="Vertes A.A."/>
            <person name="Inui M."/>
        </authorList>
    </citation>
    <scope>NUCLEOTIDE SEQUENCE [LARGE SCALE GENOMIC DNA]</scope>
    <source>
        <strain>R</strain>
    </source>
</reference>
<organism>
    <name type="scientific">Corynebacterium glutamicum (strain R)</name>
    <dbReference type="NCBI Taxonomy" id="340322"/>
    <lineage>
        <taxon>Bacteria</taxon>
        <taxon>Bacillati</taxon>
        <taxon>Actinomycetota</taxon>
        <taxon>Actinomycetes</taxon>
        <taxon>Mycobacteriales</taxon>
        <taxon>Corynebacteriaceae</taxon>
        <taxon>Corynebacterium</taxon>
    </lineage>
</organism>
<dbReference type="EMBL" id="AP009044">
    <property type="protein sequence ID" value="BAF54702.1"/>
    <property type="molecule type" value="Genomic_DNA"/>
</dbReference>
<dbReference type="RefSeq" id="WP_011897343.1">
    <property type="nucleotide sequence ID" value="NC_009342.1"/>
</dbReference>
<dbReference type="SMR" id="A4QEN6"/>
<dbReference type="KEGG" id="cgt:cgR_1708"/>
<dbReference type="HOGENOM" id="CLU_062974_2_2_11"/>
<dbReference type="PhylomeDB" id="A4QEN6"/>
<dbReference type="Proteomes" id="UP000006698">
    <property type="component" value="Chromosome"/>
</dbReference>
<dbReference type="GO" id="GO:0005829">
    <property type="term" value="C:cytosol"/>
    <property type="evidence" value="ECO:0007669"/>
    <property type="project" value="TreeGrafter"/>
</dbReference>
<dbReference type="GO" id="GO:0003677">
    <property type="term" value="F:DNA binding"/>
    <property type="evidence" value="ECO:0007669"/>
    <property type="project" value="UniProtKB-UniRule"/>
</dbReference>
<dbReference type="GO" id="GO:0006355">
    <property type="term" value="P:regulation of DNA-templated transcription"/>
    <property type="evidence" value="ECO:0007669"/>
    <property type="project" value="UniProtKB-UniRule"/>
</dbReference>
<dbReference type="FunFam" id="1.10.10.200:FF:000002">
    <property type="entry name" value="Probable transcriptional regulatory protein CLM62_37755"/>
    <property type="match status" value="1"/>
</dbReference>
<dbReference type="Gene3D" id="1.10.10.200">
    <property type="match status" value="1"/>
</dbReference>
<dbReference type="Gene3D" id="3.30.70.980">
    <property type="match status" value="2"/>
</dbReference>
<dbReference type="HAMAP" id="MF_00693">
    <property type="entry name" value="Transcrip_reg_TACO1"/>
    <property type="match status" value="1"/>
</dbReference>
<dbReference type="InterPro" id="IPR017856">
    <property type="entry name" value="Integrase-like_N"/>
</dbReference>
<dbReference type="InterPro" id="IPR048300">
    <property type="entry name" value="TACO1_YebC-like_2nd/3rd_dom"/>
</dbReference>
<dbReference type="InterPro" id="IPR049083">
    <property type="entry name" value="TACO1_YebC_N"/>
</dbReference>
<dbReference type="InterPro" id="IPR002876">
    <property type="entry name" value="Transcrip_reg_TACO1-like"/>
</dbReference>
<dbReference type="InterPro" id="IPR026564">
    <property type="entry name" value="Transcrip_reg_TACO1-like_dom3"/>
</dbReference>
<dbReference type="InterPro" id="IPR029072">
    <property type="entry name" value="YebC-like"/>
</dbReference>
<dbReference type="NCBIfam" id="NF001030">
    <property type="entry name" value="PRK00110.1"/>
    <property type="match status" value="1"/>
</dbReference>
<dbReference type="NCBIfam" id="NF009044">
    <property type="entry name" value="PRK12378.1"/>
    <property type="match status" value="1"/>
</dbReference>
<dbReference type="NCBIfam" id="TIGR01033">
    <property type="entry name" value="YebC/PmpR family DNA-binding transcriptional regulator"/>
    <property type="match status" value="1"/>
</dbReference>
<dbReference type="PANTHER" id="PTHR12532:SF6">
    <property type="entry name" value="TRANSCRIPTIONAL REGULATORY PROTEIN YEBC-RELATED"/>
    <property type="match status" value="1"/>
</dbReference>
<dbReference type="PANTHER" id="PTHR12532">
    <property type="entry name" value="TRANSLATIONAL ACTIVATOR OF CYTOCHROME C OXIDASE 1"/>
    <property type="match status" value="1"/>
</dbReference>
<dbReference type="Pfam" id="PF20772">
    <property type="entry name" value="TACO1_YebC_N"/>
    <property type="match status" value="1"/>
</dbReference>
<dbReference type="Pfam" id="PF01709">
    <property type="entry name" value="Transcrip_reg"/>
    <property type="match status" value="1"/>
</dbReference>
<dbReference type="SUPFAM" id="SSF75625">
    <property type="entry name" value="YebC-like"/>
    <property type="match status" value="1"/>
</dbReference>
<name>Y1708_CORGB</name>
<evidence type="ECO:0000255" key="1">
    <source>
        <dbReference type="HAMAP-Rule" id="MF_00693"/>
    </source>
</evidence>
<evidence type="ECO:0000256" key="2">
    <source>
        <dbReference type="SAM" id="MobiDB-lite"/>
    </source>
</evidence>
<gene>
    <name type="ordered locus">cgR_1708</name>
</gene>
<proteinExistence type="inferred from homology"/>